<comment type="function">
    <text evidence="1">Involved in the binding of tRNA to the ribosomes.</text>
</comment>
<comment type="subunit">
    <text evidence="1">Part of the 30S ribosomal subunit.</text>
</comment>
<comment type="similarity">
    <text evidence="1">Belongs to the universal ribosomal protein uS10 family.</text>
</comment>
<evidence type="ECO:0000255" key="1">
    <source>
        <dbReference type="HAMAP-Rule" id="MF_00508"/>
    </source>
</evidence>
<evidence type="ECO:0000305" key="2"/>
<organism>
    <name type="scientific">Rickettsia typhi (strain ATCC VR-144 / Wilmington)</name>
    <dbReference type="NCBI Taxonomy" id="257363"/>
    <lineage>
        <taxon>Bacteria</taxon>
        <taxon>Pseudomonadati</taxon>
        <taxon>Pseudomonadota</taxon>
        <taxon>Alphaproteobacteria</taxon>
        <taxon>Rickettsiales</taxon>
        <taxon>Rickettsiaceae</taxon>
        <taxon>Rickettsieae</taxon>
        <taxon>Rickettsia</taxon>
        <taxon>typhus group</taxon>
    </lineage>
</organism>
<keyword id="KW-0687">Ribonucleoprotein</keyword>
<keyword id="KW-0689">Ribosomal protein</keyword>
<accession>Q68W77</accession>
<proteinExistence type="inferred from homology"/>
<gene>
    <name evidence="1" type="primary">rpsJ</name>
    <name type="ordered locus">RT0652</name>
</gene>
<dbReference type="EMBL" id="AE017197">
    <property type="protein sequence ID" value="AAU04115.1"/>
    <property type="molecule type" value="Genomic_DNA"/>
</dbReference>
<dbReference type="RefSeq" id="WP_011191092.1">
    <property type="nucleotide sequence ID" value="NC_006142.1"/>
</dbReference>
<dbReference type="SMR" id="Q68W77"/>
<dbReference type="KEGG" id="rty:RT0652"/>
<dbReference type="eggNOG" id="COG0051">
    <property type="taxonomic scope" value="Bacteria"/>
</dbReference>
<dbReference type="HOGENOM" id="CLU_122625_1_3_5"/>
<dbReference type="OrthoDB" id="9804464at2"/>
<dbReference type="Proteomes" id="UP000000604">
    <property type="component" value="Chromosome"/>
</dbReference>
<dbReference type="GO" id="GO:1990904">
    <property type="term" value="C:ribonucleoprotein complex"/>
    <property type="evidence" value="ECO:0007669"/>
    <property type="project" value="UniProtKB-KW"/>
</dbReference>
<dbReference type="GO" id="GO:0005840">
    <property type="term" value="C:ribosome"/>
    <property type="evidence" value="ECO:0007669"/>
    <property type="project" value="UniProtKB-KW"/>
</dbReference>
<dbReference type="GO" id="GO:0003735">
    <property type="term" value="F:structural constituent of ribosome"/>
    <property type="evidence" value="ECO:0007669"/>
    <property type="project" value="InterPro"/>
</dbReference>
<dbReference type="GO" id="GO:0000049">
    <property type="term" value="F:tRNA binding"/>
    <property type="evidence" value="ECO:0007669"/>
    <property type="project" value="UniProtKB-UniRule"/>
</dbReference>
<dbReference type="GO" id="GO:0006412">
    <property type="term" value="P:translation"/>
    <property type="evidence" value="ECO:0007669"/>
    <property type="project" value="UniProtKB-UniRule"/>
</dbReference>
<dbReference type="FunFam" id="3.30.70.600:FF:000003">
    <property type="entry name" value="30S ribosomal protein S10"/>
    <property type="match status" value="1"/>
</dbReference>
<dbReference type="Gene3D" id="3.30.70.600">
    <property type="entry name" value="Ribosomal protein S10 domain"/>
    <property type="match status" value="1"/>
</dbReference>
<dbReference type="HAMAP" id="MF_00508">
    <property type="entry name" value="Ribosomal_uS10"/>
    <property type="match status" value="1"/>
</dbReference>
<dbReference type="InterPro" id="IPR001848">
    <property type="entry name" value="Ribosomal_uS10"/>
</dbReference>
<dbReference type="InterPro" id="IPR027486">
    <property type="entry name" value="Ribosomal_uS10_dom"/>
</dbReference>
<dbReference type="InterPro" id="IPR036838">
    <property type="entry name" value="Ribosomal_uS10_dom_sf"/>
</dbReference>
<dbReference type="NCBIfam" id="NF001861">
    <property type="entry name" value="PRK00596.1"/>
    <property type="match status" value="1"/>
</dbReference>
<dbReference type="NCBIfam" id="TIGR01049">
    <property type="entry name" value="rpsJ_bact"/>
    <property type="match status" value="1"/>
</dbReference>
<dbReference type="PANTHER" id="PTHR11700">
    <property type="entry name" value="30S RIBOSOMAL PROTEIN S10 FAMILY MEMBER"/>
    <property type="match status" value="1"/>
</dbReference>
<dbReference type="Pfam" id="PF00338">
    <property type="entry name" value="Ribosomal_S10"/>
    <property type="match status" value="1"/>
</dbReference>
<dbReference type="PRINTS" id="PR00971">
    <property type="entry name" value="RIBOSOMALS10"/>
</dbReference>
<dbReference type="SMART" id="SM01403">
    <property type="entry name" value="Ribosomal_S10"/>
    <property type="match status" value="1"/>
</dbReference>
<dbReference type="SUPFAM" id="SSF54999">
    <property type="entry name" value="Ribosomal protein S10"/>
    <property type="match status" value="1"/>
</dbReference>
<reference key="1">
    <citation type="journal article" date="2004" name="J. Bacteriol.">
        <title>Complete genome sequence of Rickettsia typhi and comparison with sequences of other Rickettsiae.</title>
        <authorList>
            <person name="McLeod M.P."/>
            <person name="Qin X."/>
            <person name="Karpathy S.E."/>
            <person name="Gioia J."/>
            <person name="Highlander S.K."/>
            <person name="Fox G.E."/>
            <person name="McNeill T.Z."/>
            <person name="Jiang H."/>
            <person name="Muzny D."/>
            <person name="Jacob L.S."/>
            <person name="Hawes A.C."/>
            <person name="Sodergren E."/>
            <person name="Gill R."/>
            <person name="Hume J."/>
            <person name="Morgan M."/>
            <person name="Fan G."/>
            <person name="Amin A.G."/>
            <person name="Gibbs R.A."/>
            <person name="Hong C."/>
            <person name="Yu X.-J."/>
            <person name="Walker D.H."/>
            <person name="Weinstock G.M."/>
        </authorList>
    </citation>
    <scope>NUCLEOTIDE SEQUENCE [LARGE SCALE GENOMIC DNA]</scope>
    <source>
        <strain>ATCC VR-144 / Wilmington</strain>
    </source>
</reference>
<feature type="chain" id="PRO_0000237089" description="Small ribosomal subunit protein uS10">
    <location>
        <begin position="1"/>
        <end position="105"/>
    </location>
</feature>
<sequence length="105" mass="11959">MKNKIKIRLKSFDHRSLDQATKEIVSAVKRTFATINGPIPLPRKIERFTVNRSPHVHKKSREQFEIRKHKRLLVIDDPNPAVVDALSKVDLAAGVDVVIELENGE</sequence>
<protein>
    <recommendedName>
        <fullName evidence="1">Small ribosomal subunit protein uS10</fullName>
    </recommendedName>
    <alternativeName>
        <fullName evidence="2">30S ribosomal protein S10</fullName>
    </alternativeName>
</protein>
<name>RS10_RICTY</name>